<reference key="1">
    <citation type="journal article" date="2004" name="Nucleic Acids Res.">
        <title>The genome sequence of Bacillus cereus ATCC 10987 reveals metabolic adaptations and a large plasmid related to Bacillus anthracis pXO1.</title>
        <authorList>
            <person name="Rasko D.A."/>
            <person name="Ravel J."/>
            <person name="Oekstad O.A."/>
            <person name="Helgason E."/>
            <person name="Cer R.Z."/>
            <person name="Jiang L."/>
            <person name="Shores K.A."/>
            <person name="Fouts D.E."/>
            <person name="Tourasse N.J."/>
            <person name="Angiuoli S.V."/>
            <person name="Kolonay J.F."/>
            <person name="Nelson W.C."/>
            <person name="Kolstoe A.-B."/>
            <person name="Fraser C.M."/>
            <person name="Read T.D."/>
        </authorList>
    </citation>
    <scope>NUCLEOTIDE SEQUENCE [LARGE SCALE GENOMIC DNA]</scope>
    <source>
        <strain>ATCC 10987 / NRS 248</strain>
    </source>
</reference>
<evidence type="ECO:0000255" key="1">
    <source>
        <dbReference type="HAMAP-Rule" id="MF_00362"/>
    </source>
</evidence>
<evidence type="ECO:0000305" key="2"/>
<proteinExistence type="inferred from homology"/>
<organism>
    <name type="scientific">Bacillus cereus (strain ATCC 10987 / NRS 248)</name>
    <dbReference type="NCBI Taxonomy" id="222523"/>
    <lineage>
        <taxon>Bacteria</taxon>
        <taxon>Bacillati</taxon>
        <taxon>Bacillota</taxon>
        <taxon>Bacilli</taxon>
        <taxon>Bacillales</taxon>
        <taxon>Bacillaceae</taxon>
        <taxon>Bacillus</taxon>
        <taxon>Bacillus cereus group</taxon>
    </lineage>
</organism>
<sequence>MSKVIETKQQVVTEIADKLRASKSTIVVDYRGLTVSEATELRKQLREAGVEFKVYKNSLTRRAAESAEMAELNEFLTGPNAIAFSNEDVVAPAKVLNDFAKDHEALEIKAGVIEGKLVTLDEVKAIATLPSREGLLSMLLSVLQAPIRNLALATKAVADQKEEQGA</sequence>
<protein>
    <recommendedName>
        <fullName evidence="1">Large ribosomal subunit protein uL10</fullName>
    </recommendedName>
    <alternativeName>
        <fullName evidence="2">50S ribosomal protein L10</fullName>
    </alternativeName>
</protein>
<dbReference type="EMBL" id="AE017194">
    <property type="protein sequence ID" value="AAS39035.1"/>
    <property type="molecule type" value="Genomic_DNA"/>
</dbReference>
<dbReference type="SMR" id="Q73FA7"/>
<dbReference type="KEGG" id="bca:BCE_0099"/>
<dbReference type="HOGENOM" id="CLU_092227_2_0_9"/>
<dbReference type="Proteomes" id="UP000002527">
    <property type="component" value="Chromosome"/>
</dbReference>
<dbReference type="GO" id="GO:0015934">
    <property type="term" value="C:large ribosomal subunit"/>
    <property type="evidence" value="ECO:0007669"/>
    <property type="project" value="InterPro"/>
</dbReference>
<dbReference type="GO" id="GO:0070180">
    <property type="term" value="F:large ribosomal subunit rRNA binding"/>
    <property type="evidence" value="ECO:0007669"/>
    <property type="project" value="UniProtKB-UniRule"/>
</dbReference>
<dbReference type="GO" id="GO:0003735">
    <property type="term" value="F:structural constituent of ribosome"/>
    <property type="evidence" value="ECO:0007669"/>
    <property type="project" value="InterPro"/>
</dbReference>
<dbReference type="GO" id="GO:0006412">
    <property type="term" value="P:translation"/>
    <property type="evidence" value="ECO:0007669"/>
    <property type="project" value="UniProtKB-UniRule"/>
</dbReference>
<dbReference type="CDD" id="cd05797">
    <property type="entry name" value="Ribosomal_L10"/>
    <property type="match status" value="1"/>
</dbReference>
<dbReference type="FunFam" id="3.30.70.1730:FF:000001">
    <property type="entry name" value="50S ribosomal protein L10"/>
    <property type="match status" value="1"/>
</dbReference>
<dbReference type="Gene3D" id="3.30.70.1730">
    <property type="match status" value="1"/>
</dbReference>
<dbReference type="Gene3D" id="6.10.250.290">
    <property type="match status" value="1"/>
</dbReference>
<dbReference type="HAMAP" id="MF_00362">
    <property type="entry name" value="Ribosomal_uL10"/>
    <property type="match status" value="1"/>
</dbReference>
<dbReference type="InterPro" id="IPR001790">
    <property type="entry name" value="Ribosomal_uL10"/>
</dbReference>
<dbReference type="InterPro" id="IPR043141">
    <property type="entry name" value="Ribosomal_uL10-like_sf"/>
</dbReference>
<dbReference type="InterPro" id="IPR022973">
    <property type="entry name" value="Ribosomal_uL10_bac"/>
</dbReference>
<dbReference type="InterPro" id="IPR047865">
    <property type="entry name" value="Ribosomal_uL10_bac_type"/>
</dbReference>
<dbReference type="InterPro" id="IPR002363">
    <property type="entry name" value="Ribosomal_uL10_CS_bac"/>
</dbReference>
<dbReference type="NCBIfam" id="NF000955">
    <property type="entry name" value="PRK00099.1-1"/>
    <property type="match status" value="1"/>
</dbReference>
<dbReference type="PANTHER" id="PTHR11560">
    <property type="entry name" value="39S RIBOSOMAL PROTEIN L10, MITOCHONDRIAL"/>
    <property type="match status" value="1"/>
</dbReference>
<dbReference type="Pfam" id="PF00466">
    <property type="entry name" value="Ribosomal_L10"/>
    <property type="match status" value="1"/>
</dbReference>
<dbReference type="SUPFAM" id="SSF160369">
    <property type="entry name" value="Ribosomal protein L10-like"/>
    <property type="match status" value="1"/>
</dbReference>
<dbReference type="PROSITE" id="PS01109">
    <property type="entry name" value="RIBOSOMAL_L10"/>
    <property type="match status" value="1"/>
</dbReference>
<accession>Q73FA7</accession>
<gene>
    <name evidence="1" type="primary">rplJ</name>
    <name type="ordered locus">BCE_0099</name>
</gene>
<comment type="function">
    <text evidence="1">Forms part of the ribosomal stalk, playing a central role in the interaction of the ribosome with GTP-bound translation factors.</text>
</comment>
<comment type="subunit">
    <text evidence="1">Part of the ribosomal stalk of the 50S ribosomal subunit. The N-terminus interacts with L11 and the large rRNA to form the base of the stalk. The C-terminus forms an elongated spine to which L12 dimers bind in a sequential fashion forming a multimeric L10(L12)X complex.</text>
</comment>
<comment type="similarity">
    <text evidence="1">Belongs to the universal ribosomal protein uL10 family.</text>
</comment>
<keyword id="KW-0687">Ribonucleoprotein</keyword>
<keyword id="KW-0689">Ribosomal protein</keyword>
<keyword id="KW-0694">RNA-binding</keyword>
<keyword id="KW-0699">rRNA-binding</keyword>
<name>RL10_BACC1</name>
<feature type="chain" id="PRO_0000154582" description="Large ribosomal subunit protein uL10">
    <location>
        <begin position="1"/>
        <end position="166"/>
    </location>
</feature>